<evidence type="ECO:0000250" key="1"/>
<evidence type="ECO:0000255" key="2">
    <source>
        <dbReference type="HAMAP-Rule" id="MF_00047"/>
    </source>
</evidence>
<feature type="chain" id="PRO_1000202207" description="D-alanine--D-alanine ligase">
    <location>
        <begin position="1"/>
        <end position="330"/>
    </location>
</feature>
<feature type="domain" description="ATP-grasp" evidence="2">
    <location>
        <begin position="120"/>
        <end position="326"/>
    </location>
</feature>
<feature type="binding site" evidence="2">
    <location>
        <begin position="150"/>
        <end position="205"/>
    </location>
    <ligand>
        <name>ATP</name>
        <dbReference type="ChEBI" id="CHEBI:30616"/>
    </ligand>
</feature>
<feature type="binding site" evidence="2">
    <location>
        <position position="280"/>
    </location>
    <ligand>
        <name>Mg(2+)</name>
        <dbReference type="ChEBI" id="CHEBI:18420"/>
        <label>1</label>
    </ligand>
</feature>
<feature type="binding site" evidence="2">
    <location>
        <position position="293"/>
    </location>
    <ligand>
        <name>Mg(2+)</name>
        <dbReference type="ChEBI" id="CHEBI:18420"/>
        <label>1</label>
    </ligand>
</feature>
<feature type="binding site" evidence="2">
    <location>
        <position position="293"/>
    </location>
    <ligand>
        <name>Mg(2+)</name>
        <dbReference type="ChEBI" id="CHEBI:18420"/>
        <label>2</label>
    </ligand>
</feature>
<feature type="binding site" evidence="2">
    <location>
        <position position="295"/>
    </location>
    <ligand>
        <name>Mg(2+)</name>
        <dbReference type="ChEBI" id="CHEBI:18420"/>
        <label>2</label>
    </ligand>
</feature>
<sequence length="330" mass="36451">MKHLHVLLLCGGGGSEHEISLLSANYLESQLKELAEVSVTRVELFPDHWQTNDGRSCHLGMDRQLHFANEAKPVDFVVPCIHGFPGETGDIQSMLELIGLPYLGCGSEGSKLCFNKVSTKLWLSALDIPNTPFLFLSDNNEAAHAQAHTAFRNWGAVFVKAASQGSSVGCYKVTDAAKLSEAVNAAFGYSDQVLVEKAVRPRELEVAVYRYNDQLVATRPGEIATPSDSFYSYEEKYSSGSNSTTYLEAPGLSDAQISTIREYALKAFTQLGLKDLSRIDFFLTEDNEILLNEINTFPGMTPISMFPKLLEHHGDNFKQFLEGIIRSTVK</sequence>
<dbReference type="EC" id="6.3.2.4" evidence="2"/>
<dbReference type="EMBL" id="CP001616">
    <property type="protein sequence ID" value="ACQ91862.1"/>
    <property type="molecule type" value="Genomic_DNA"/>
</dbReference>
<dbReference type="RefSeq" id="WP_012728461.1">
    <property type="nucleotide sequence ID" value="NC_012691.1"/>
</dbReference>
<dbReference type="SMR" id="C4L8J2"/>
<dbReference type="STRING" id="595494.Tola_0232"/>
<dbReference type="KEGG" id="tau:Tola_0232"/>
<dbReference type="eggNOG" id="COG1181">
    <property type="taxonomic scope" value="Bacteria"/>
</dbReference>
<dbReference type="HOGENOM" id="CLU_039268_0_0_6"/>
<dbReference type="OrthoDB" id="9813261at2"/>
<dbReference type="UniPathway" id="UPA00219"/>
<dbReference type="Proteomes" id="UP000009073">
    <property type="component" value="Chromosome"/>
</dbReference>
<dbReference type="GO" id="GO:0005829">
    <property type="term" value="C:cytosol"/>
    <property type="evidence" value="ECO:0007669"/>
    <property type="project" value="TreeGrafter"/>
</dbReference>
<dbReference type="GO" id="GO:0005524">
    <property type="term" value="F:ATP binding"/>
    <property type="evidence" value="ECO:0007669"/>
    <property type="project" value="UniProtKB-KW"/>
</dbReference>
<dbReference type="GO" id="GO:0008716">
    <property type="term" value="F:D-alanine-D-alanine ligase activity"/>
    <property type="evidence" value="ECO:0007669"/>
    <property type="project" value="UniProtKB-UniRule"/>
</dbReference>
<dbReference type="GO" id="GO:0046872">
    <property type="term" value="F:metal ion binding"/>
    <property type="evidence" value="ECO:0007669"/>
    <property type="project" value="UniProtKB-KW"/>
</dbReference>
<dbReference type="GO" id="GO:0071555">
    <property type="term" value="P:cell wall organization"/>
    <property type="evidence" value="ECO:0007669"/>
    <property type="project" value="UniProtKB-KW"/>
</dbReference>
<dbReference type="GO" id="GO:0009252">
    <property type="term" value="P:peptidoglycan biosynthetic process"/>
    <property type="evidence" value="ECO:0007669"/>
    <property type="project" value="UniProtKB-UniRule"/>
</dbReference>
<dbReference type="GO" id="GO:0008360">
    <property type="term" value="P:regulation of cell shape"/>
    <property type="evidence" value="ECO:0007669"/>
    <property type="project" value="UniProtKB-KW"/>
</dbReference>
<dbReference type="Gene3D" id="3.40.50.20">
    <property type="match status" value="1"/>
</dbReference>
<dbReference type="Gene3D" id="3.30.1490.20">
    <property type="entry name" value="ATP-grasp fold, A domain"/>
    <property type="match status" value="1"/>
</dbReference>
<dbReference type="Gene3D" id="3.30.470.20">
    <property type="entry name" value="ATP-grasp fold, B domain"/>
    <property type="match status" value="1"/>
</dbReference>
<dbReference type="HAMAP" id="MF_00047">
    <property type="entry name" value="Dala_Dala_lig"/>
    <property type="match status" value="1"/>
</dbReference>
<dbReference type="InterPro" id="IPR011761">
    <property type="entry name" value="ATP-grasp"/>
</dbReference>
<dbReference type="InterPro" id="IPR013815">
    <property type="entry name" value="ATP_grasp_subdomain_1"/>
</dbReference>
<dbReference type="InterPro" id="IPR000291">
    <property type="entry name" value="D-Ala_lig_Van_CS"/>
</dbReference>
<dbReference type="InterPro" id="IPR005905">
    <property type="entry name" value="D_ala_D_ala"/>
</dbReference>
<dbReference type="InterPro" id="IPR011095">
    <property type="entry name" value="Dala_Dala_lig_C"/>
</dbReference>
<dbReference type="InterPro" id="IPR011127">
    <property type="entry name" value="Dala_Dala_lig_N"/>
</dbReference>
<dbReference type="InterPro" id="IPR016185">
    <property type="entry name" value="PreATP-grasp_dom_sf"/>
</dbReference>
<dbReference type="NCBIfam" id="TIGR01205">
    <property type="entry name" value="D_ala_D_alaTIGR"/>
    <property type="match status" value="1"/>
</dbReference>
<dbReference type="NCBIfam" id="NF002527">
    <property type="entry name" value="PRK01966.1-3"/>
    <property type="match status" value="1"/>
</dbReference>
<dbReference type="PANTHER" id="PTHR23132">
    <property type="entry name" value="D-ALANINE--D-ALANINE LIGASE"/>
    <property type="match status" value="1"/>
</dbReference>
<dbReference type="PANTHER" id="PTHR23132:SF25">
    <property type="entry name" value="D-ALANINE--D-ALANINE LIGASE A"/>
    <property type="match status" value="1"/>
</dbReference>
<dbReference type="Pfam" id="PF07478">
    <property type="entry name" value="Dala_Dala_lig_C"/>
    <property type="match status" value="1"/>
</dbReference>
<dbReference type="Pfam" id="PF01820">
    <property type="entry name" value="Dala_Dala_lig_N"/>
    <property type="match status" value="1"/>
</dbReference>
<dbReference type="PIRSF" id="PIRSF039102">
    <property type="entry name" value="Ddl/VanB"/>
    <property type="match status" value="1"/>
</dbReference>
<dbReference type="SUPFAM" id="SSF56059">
    <property type="entry name" value="Glutathione synthetase ATP-binding domain-like"/>
    <property type="match status" value="1"/>
</dbReference>
<dbReference type="SUPFAM" id="SSF52440">
    <property type="entry name" value="PreATP-grasp domain"/>
    <property type="match status" value="1"/>
</dbReference>
<dbReference type="PROSITE" id="PS50975">
    <property type="entry name" value="ATP_GRASP"/>
    <property type="match status" value="1"/>
</dbReference>
<dbReference type="PROSITE" id="PS00843">
    <property type="entry name" value="DALA_DALA_LIGASE_1"/>
    <property type="match status" value="1"/>
</dbReference>
<dbReference type="PROSITE" id="PS00844">
    <property type="entry name" value="DALA_DALA_LIGASE_2"/>
    <property type="match status" value="1"/>
</dbReference>
<gene>
    <name evidence="2" type="primary">ddl</name>
    <name type="ordered locus">Tola_0232</name>
</gene>
<reference key="1">
    <citation type="submission" date="2009-05" db="EMBL/GenBank/DDBJ databases">
        <title>Complete sequence of Tolumonas auensis DSM 9187.</title>
        <authorList>
            <consortium name="US DOE Joint Genome Institute"/>
            <person name="Lucas S."/>
            <person name="Copeland A."/>
            <person name="Lapidus A."/>
            <person name="Glavina del Rio T."/>
            <person name="Tice H."/>
            <person name="Bruce D."/>
            <person name="Goodwin L."/>
            <person name="Pitluck S."/>
            <person name="Chertkov O."/>
            <person name="Brettin T."/>
            <person name="Detter J.C."/>
            <person name="Han C."/>
            <person name="Larimer F."/>
            <person name="Land M."/>
            <person name="Hauser L."/>
            <person name="Kyrpides N."/>
            <person name="Mikhailova N."/>
            <person name="Spring S."/>
            <person name="Beller H."/>
        </authorList>
    </citation>
    <scope>NUCLEOTIDE SEQUENCE [LARGE SCALE GENOMIC DNA]</scope>
    <source>
        <strain>DSM 9187 / NBRC 110442 / TA 4</strain>
    </source>
</reference>
<accession>C4L8J2</accession>
<comment type="function">
    <text evidence="2">Cell wall formation.</text>
</comment>
<comment type="catalytic activity">
    <reaction evidence="2">
        <text>2 D-alanine + ATP = D-alanyl-D-alanine + ADP + phosphate + H(+)</text>
        <dbReference type="Rhea" id="RHEA:11224"/>
        <dbReference type="ChEBI" id="CHEBI:15378"/>
        <dbReference type="ChEBI" id="CHEBI:30616"/>
        <dbReference type="ChEBI" id="CHEBI:43474"/>
        <dbReference type="ChEBI" id="CHEBI:57416"/>
        <dbReference type="ChEBI" id="CHEBI:57822"/>
        <dbReference type="ChEBI" id="CHEBI:456216"/>
        <dbReference type="EC" id="6.3.2.4"/>
    </reaction>
</comment>
<comment type="cofactor">
    <cofactor evidence="1">
        <name>Mg(2+)</name>
        <dbReference type="ChEBI" id="CHEBI:18420"/>
    </cofactor>
    <cofactor evidence="1">
        <name>Mn(2+)</name>
        <dbReference type="ChEBI" id="CHEBI:29035"/>
    </cofactor>
    <text evidence="1">Binds 2 magnesium or manganese ions per subunit.</text>
</comment>
<comment type="pathway">
    <text evidence="2">Cell wall biogenesis; peptidoglycan biosynthesis.</text>
</comment>
<comment type="subcellular location">
    <subcellularLocation>
        <location evidence="2">Cytoplasm</location>
    </subcellularLocation>
</comment>
<comment type="similarity">
    <text evidence="2">Belongs to the D-alanine--D-alanine ligase family.</text>
</comment>
<name>DDL_TOLAT</name>
<proteinExistence type="inferred from homology"/>
<organism>
    <name type="scientific">Tolumonas auensis (strain DSM 9187 / NBRC 110442 / TA 4)</name>
    <dbReference type="NCBI Taxonomy" id="595494"/>
    <lineage>
        <taxon>Bacteria</taxon>
        <taxon>Pseudomonadati</taxon>
        <taxon>Pseudomonadota</taxon>
        <taxon>Gammaproteobacteria</taxon>
        <taxon>Aeromonadales</taxon>
        <taxon>Aeromonadaceae</taxon>
        <taxon>Tolumonas</taxon>
    </lineage>
</organism>
<protein>
    <recommendedName>
        <fullName evidence="2">D-alanine--D-alanine ligase</fullName>
        <ecNumber evidence="2">6.3.2.4</ecNumber>
    </recommendedName>
    <alternativeName>
        <fullName evidence="2">D-Ala-D-Ala ligase</fullName>
    </alternativeName>
    <alternativeName>
        <fullName evidence="2">D-alanylalanine synthetase</fullName>
    </alternativeName>
</protein>
<keyword id="KW-0067">ATP-binding</keyword>
<keyword id="KW-0133">Cell shape</keyword>
<keyword id="KW-0961">Cell wall biogenesis/degradation</keyword>
<keyword id="KW-0963">Cytoplasm</keyword>
<keyword id="KW-0436">Ligase</keyword>
<keyword id="KW-0460">Magnesium</keyword>
<keyword id="KW-0464">Manganese</keyword>
<keyword id="KW-0479">Metal-binding</keyword>
<keyword id="KW-0547">Nucleotide-binding</keyword>
<keyword id="KW-0573">Peptidoglycan synthesis</keyword>
<keyword id="KW-1185">Reference proteome</keyword>